<sequence length="196" mass="20189">MIASVRGEVLEVALDHVVIEAAGVGYRVNATPATLATLRQGTEARLITAMIVREDSMTLYGFPDGETRDLFLTLLSVSGVGPRLAMAALAVHDAPALRQVLADGNVAALTRVPGIGKRGAERMVLELRDKVGVAATGGALSTNGHAVRSPVVEALVGLGFAAKQAEEATDTVLAANHDATTSSALRSALSLLGKAR</sequence>
<keyword id="KW-0963">Cytoplasm</keyword>
<keyword id="KW-0227">DNA damage</keyword>
<keyword id="KW-0233">DNA recombination</keyword>
<keyword id="KW-0234">DNA repair</keyword>
<keyword id="KW-0238">DNA-binding</keyword>
<reference key="1">
    <citation type="journal article" date="2007" name="Proc. Natl. Acad. Sci. U.S.A.">
        <title>Genome plasticity of BCG and impact on vaccine efficacy.</title>
        <authorList>
            <person name="Brosch R."/>
            <person name="Gordon S.V."/>
            <person name="Garnier T."/>
            <person name="Eiglmeier K."/>
            <person name="Frigui W."/>
            <person name="Valenti P."/>
            <person name="Dos Santos S."/>
            <person name="Duthoy S."/>
            <person name="Lacroix C."/>
            <person name="Garcia-Pelayo C."/>
            <person name="Inwald J.K."/>
            <person name="Golby P."/>
            <person name="Garcia J.N."/>
            <person name="Hewinson R.G."/>
            <person name="Behr M.A."/>
            <person name="Quail M.A."/>
            <person name="Churcher C."/>
            <person name="Barrell B.G."/>
            <person name="Parkhill J."/>
            <person name="Cole S.T."/>
        </authorList>
    </citation>
    <scope>NUCLEOTIDE SEQUENCE [LARGE SCALE GENOMIC DNA]</scope>
    <source>
        <strain>BCG / Pasteur 1173P2</strain>
    </source>
</reference>
<comment type="function">
    <text evidence="1">The RuvA-RuvB-RuvC complex processes Holliday junction (HJ) DNA during genetic recombination and DNA repair, while the RuvA-RuvB complex plays an important role in the rescue of blocked DNA replication forks via replication fork reversal (RFR). RuvA specifically binds to HJ cruciform DNA, conferring on it an open structure. The RuvB hexamer acts as an ATP-dependent pump, pulling dsDNA into and through the RuvAB complex. HJ branch migration allows RuvC to scan DNA until it finds its consensus sequence, where it cleaves and resolves the cruciform DNA.</text>
</comment>
<comment type="subunit">
    <text evidence="1">Homotetramer. Forms an RuvA(8)-RuvB(12)-Holliday junction (HJ) complex. HJ DNA is sandwiched between 2 RuvA tetramers; dsDNA enters through RuvA and exits via RuvB. An RuvB hexamer assembles on each DNA strand where it exits the tetramer. Each RuvB hexamer is contacted by two RuvA subunits (via domain III) on 2 adjacent RuvB subunits; this complex drives branch migration. In the full resolvosome a probable DNA-RuvA(4)-RuvB(12)-RuvC(2) complex forms which resolves the HJ.</text>
</comment>
<comment type="subcellular location">
    <subcellularLocation>
        <location evidence="1">Cytoplasm</location>
    </subcellularLocation>
</comment>
<comment type="domain">
    <text evidence="1">Has three domains with a flexible linker between the domains II and III and assumes an 'L' shape. Domain III is highly mobile and contacts RuvB.</text>
</comment>
<comment type="similarity">
    <text evidence="1">Belongs to the RuvA family.</text>
</comment>
<proteinExistence type="inferred from homology"/>
<gene>
    <name evidence="1" type="primary">ruvA</name>
    <name type="ordered locus">BCG_2616c</name>
</gene>
<feature type="chain" id="PRO_1000002488" description="Holliday junction branch migration complex subunit RuvA">
    <location>
        <begin position="1"/>
        <end position="196"/>
    </location>
</feature>
<feature type="region of interest" description="Domain I" evidence="1">
    <location>
        <begin position="1"/>
        <end position="63"/>
    </location>
</feature>
<feature type="region of interest" description="Domain II" evidence="1">
    <location>
        <begin position="64"/>
        <end position="138"/>
    </location>
</feature>
<feature type="region of interest" description="Flexible linker" evidence="1">
    <location>
        <begin position="138"/>
        <end position="142"/>
    </location>
</feature>
<feature type="region of interest" description="Domain III" evidence="1">
    <location>
        <begin position="143"/>
        <end position="196"/>
    </location>
</feature>
<organism>
    <name type="scientific">Mycobacterium bovis (strain BCG / Pasteur 1173P2)</name>
    <dbReference type="NCBI Taxonomy" id="410289"/>
    <lineage>
        <taxon>Bacteria</taxon>
        <taxon>Bacillati</taxon>
        <taxon>Actinomycetota</taxon>
        <taxon>Actinomycetes</taxon>
        <taxon>Mycobacteriales</taxon>
        <taxon>Mycobacteriaceae</taxon>
        <taxon>Mycobacterium</taxon>
        <taxon>Mycobacterium tuberculosis complex</taxon>
    </lineage>
</organism>
<dbReference type="EMBL" id="AM408590">
    <property type="protein sequence ID" value="CAL72604.1"/>
    <property type="molecule type" value="Genomic_DNA"/>
</dbReference>
<dbReference type="RefSeq" id="WP_003413421.1">
    <property type="nucleotide sequence ID" value="NC_008769.1"/>
</dbReference>
<dbReference type="SMR" id="A1KLU1"/>
<dbReference type="GeneID" id="45426595"/>
<dbReference type="KEGG" id="mbb:BCG_2616c"/>
<dbReference type="HOGENOM" id="CLU_087936_2_1_11"/>
<dbReference type="Proteomes" id="UP000001472">
    <property type="component" value="Chromosome"/>
</dbReference>
<dbReference type="GO" id="GO:0005737">
    <property type="term" value="C:cytoplasm"/>
    <property type="evidence" value="ECO:0007669"/>
    <property type="project" value="UniProtKB-SubCell"/>
</dbReference>
<dbReference type="GO" id="GO:0009379">
    <property type="term" value="C:Holliday junction helicase complex"/>
    <property type="evidence" value="ECO:0007669"/>
    <property type="project" value="InterPro"/>
</dbReference>
<dbReference type="GO" id="GO:0048476">
    <property type="term" value="C:Holliday junction resolvase complex"/>
    <property type="evidence" value="ECO:0007669"/>
    <property type="project" value="UniProtKB-UniRule"/>
</dbReference>
<dbReference type="GO" id="GO:0005524">
    <property type="term" value="F:ATP binding"/>
    <property type="evidence" value="ECO:0007669"/>
    <property type="project" value="InterPro"/>
</dbReference>
<dbReference type="GO" id="GO:0000400">
    <property type="term" value="F:four-way junction DNA binding"/>
    <property type="evidence" value="ECO:0007669"/>
    <property type="project" value="UniProtKB-UniRule"/>
</dbReference>
<dbReference type="GO" id="GO:0009378">
    <property type="term" value="F:four-way junction helicase activity"/>
    <property type="evidence" value="ECO:0007669"/>
    <property type="project" value="InterPro"/>
</dbReference>
<dbReference type="GO" id="GO:0006310">
    <property type="term" value="P:DNA recombination"/>
    <property type="evidence" value="ECO:0007669"/>
    <property type="project" value="UniProtKB-UniRule"/>
</dbReference>
<dbReference type="GO" id="GO:0006281">
    <property type="term" value="P:DNA repair"/>
    <property type="evidence" value="ECO:0007669"/>
    <property type="project" value="UniProtKB-UniRule"/>
</dbReference>
<dbReference type="CDD" id="cd14332">
    <property type="entry name" value="UBA_RuvA_C"/>
    <property type="match status" value="1"/>
</dbReference>
<dbReference type="FunFam" id="1.10.150.20:FF:000093">
    <property type="entry name" value="Holliday junction ATP-dependent DNA helicase RuvA"/>
    <property type="match status" value="1"/>
</dbReference>
<dbReference type="FunFam" id="2.40.50.140:FF:000083">
    <property type="entry name" value="Holliday junction ATP-dependent DNA helicase RuvA"/>
    <property type="match status" value="1"/>
</dbReference>
<dbReference type="Gene3D" id="1.10.150.20">
    <property type="entry name" value="5' to 3' exonuclease, C-terminal subdomain"/>
    <property type="match status" value="1"/>
</dbReference>
<dbReference type="Gene3D" id="1.10.8.10">
    <property type="entry name" value="DNA helicase RuvA subunit, C-terminal domain"/>
    <property type="match status" value="1"/>
</dbReference>
<dbReference type="Gene3D" id="2.40.50.140">
    <property type="entry name" value="Nucleic acid-binding proteins"/>
    <property type="match status" value="1"/>
</dbReference>
<dbReference type="HAMAP" id="MF_00031">
    <property type="entry name" value="DNA_HJ_migration_RuvA"/>
    <property type="match status" value="1"/>
</dbReference>
<dbReference type="InterPro" id="IPR013849">
    <property type="entry name" value="DNA_helicase_Holl-junc_RuvA_I"/>
</dbReference>
<dbReference type="InterPro" id="IPR003583">
    <property type="entry name" value="Hlx-hairpin-Hlx_DNA-bd_motif"/>
</dbReference>
<dbReference type="InterPro" id="IPR012340">
    <property type="entry name" value="NA-bd_OB-fold"/>
</dbReference>
<dbReference type="InterPro" id="IPR000085">
    <property type="entry name" value="RuvA"/>
</dbReference>
<dbReference type="InterPro" id="IPR010994">
    <property type="entry name" value="RuvA_2-like"/>
</dbReference>
<dbReference type="InterPro" id="IPR011114">
    <property type="entry name" value="RuvA_C"/>
</dbReference>
<dbReference type="InterPro" id="IPR036267">
    <property type="entry name" value="RuvA_C_sf"/>
</dbReference>
<dbReference type="NCBIfam" id="TIGR00084">
    <property type="entry name" value="ruvA"/>
    <property type="match status" value="1"/>
</dbReference>
<dbReference type="Pfam" id="PF14520">
    <property type="entry name" value="HHH_5"/>
    <property type="match status" value="1"/>
</dbReference>
<dbReference type="Pfam" id="PF07499">
    <property type="entry name" value="RuvA_C"/>
    <property type="match status" value="1"/>
</dbReference>
<dbReference type="Pfam" id="PF01330">
    <property type="entry name" value="RuvA_N"/>
    <property type="match status" value="1"/>
</dbReference>
<dbReference type="SMART" id="SM00278">
    <property type="entry name" value="HhH1"/>
    <property type="match status" value="2"/>
</dbReference>
<dbReference type="SUPFAM" id="SSF46929">
    <property type="entry name" value="DNA helicase RuvA subunit, C-terminal domain"/>
    <property type="match status" value="1"/>
</dbReference>
<dbReference type="SUPFAM" id="SSF50249">
    <property type="entry name" value="Nucleic acid-binding proteins"/>
    <property type="match status" value="1"/>
</dbReference>
<dbReference type="SUPFAM" id="SSF47781">
    <property type="entry name" value="RuvA domain 2-like"/>
    <property type="match status" value="1"/>
</dbReference>
<evidence type="ECO:0000255" key="1">
    <source>
        <dbReference type="HAMAP-Rule" id="MF_00031"/>
    </source>
</evidence>
<name>RUVA_MYCBP</name>
<accession>A1KLU1</accession>
<protein>
    <recommendedName>
        <fullName evidence="1">Holliday junction branch migration complex subunit RuvA</fullName>
    </recommendedName>
</protein>